<dbReference type="EMBL" id="CP000142">
    <property type="protein sequence ID" value="ABA89240.1"/>
    <property type="molecule type" value="Genomic_DNA"/>
</dbReference>
<dbReference type="RefSeq" id="WP_011341750.1">
    <property type="nucleotide sequence ID" value="NC_007498.2"/>
</dbReference>
<dbReference type="SMR" id="Q3A317"/>
<dbReference type="STRING" id="338963.Pcar_1999"/>
<dbReference type="KEGG" id="pca:Pcar_1999"/>
<dbReference type="eggNOG" id="COG0360">
    <property type="taxonomic scope" value="Bacteria"/>
</dbReference>
<dbReference type="HOGENOM" id="CLU_113441_4_3_7"/>
<dbReference type="OrthoDB" id="9812702at2"/>
<dbReference type="Proteomes" id="UP000002534">
    <property type="component" value="Chromosome"/>
</dbReference>
<dbReference type="GO" id="GO:0022627">
    <property type="term" value="C:cytosolic small ribosomal subunit"/>
    <property type="evidence" value="ECO:0007669"/>
    <property type="project" value="TreeGrafter"/>
</dbReference>
<dbReference type="GO" id="GO:0070181">
    <property type="term" value="F:small ribosomal subunit rRNA binding"/>
    <property type="evidence" value="ECO:0007669"/>
    <property type="project" value="TreeGrafter"/>
</dbReference>
<dbReference type="GO" id="GO:0003735">
    <property type="term" value="F:structural constituent of ribosome"/>
    <property type="evidence" value="ECO:0007669"/>
    <property type="project" value="InterPro"/>
</dbReference>
<dbReference type="GO" id="GO:0006412">
    <property type="term" value="P:translation"/>
    <property type="evidence" value="ECO:0007669"/>
    <property type="project" value="UniProtKB-UniRule"/>
</dbReference>
<dbReference type="CDD" id="cd00473">
    <property type="entry name" value="bS6"/>
    <property type="match status" value="1"/>
</dbReference>
<dbReference type="Gene3D" id="3.30.70.60">
    <property type="match status" value="1"/>
</dbReference>
<dbReference type="HAMAP" id="MF_00360">
    <property type="entry name" value="Ribosomal_bS6"/>
    <property type="match status" value="1"/>
</dbReference>
<dbReference type="InterPro" id="IPR000529">
    <property type="entry name" value="Ribosomal_bS6"/>
</dbReference>
<dbReference type="InterPro" id="IPR035980">
    <property type="entry name" value="Ribosomal_bS6_sf"/>
</dbReference>
<dbReference type="InterPro" id="IPR020814">
    <property type="entry name" value="Ribosomal_S6_plastid/chlpt"/>
</dbReference>
<dbReference type="InterPro" id="IPR014717">
    <property type="entry name" value="Transl_elong_EF1B/ribsomal_bS6"/>
</dbReference>
<dbReference type="NCBIfam" id="TIGR00166">
    <property type="entry name" value="S6"/>
    <property type="match status" value="1"/>
</dbReference>
<dbReference type="PANTHER" id="PTHR21011">
    <property type="entry name" value="MITOCHONDRIAL 28S RIBOSOMAL PROTEIN S6"/>
    <property type="match status" value="1"/>
</dbReference>
<dbReference type="PANTHER" id="PTHR21011:SF1">
    <property type="entry name" value="SMALL RIBOSOMAL SUBUNIT PROTEIN BS6M"/>
    <property type="match status" value="1"/>
</dbReference>
<dbReference type="Pfam" id="PF01250">
    <property type="entry name" value="Ribosomal_S6"/>
    <property type="match status" value="1"/>
</dbReference>
<dbReference type="SUPFAM" id="SSF54995">
    <property type="entry name" value="Ribosomal protein S6"/>
    <property type="match status" value="1"/>
</dbReference>
<keyword id="KW-1185">Reference proteome</keyword>
<keyword id="KW-0687">Ribonucleoprotein</keyword>
<keyword id="KW-0689">Ribosomal protein</keyword>
<keyword id="KW-0694">RNA-binding</keyword>
<keyword id="KW-0699">rRNA-binding</keyword>
<proteinExistence type="inferred from homology"/>
<protein>
    <recommendedName>
        <fullName evidence="1">Small ribosomal subunit protein bS6</fullName>
    </recommendedName>
    <alternativeName>
        <fullName evidence="2">30S ribosomal protein S6</fullName>
    </alternativeName>
</protein>
<comment type="function">
    <text evidence="1">Binds together with bS18 to 16S ribosomal RNA.</text>
</comment>
<comment type="similarity">
    <text evidence="1">Belongs to the bacterial ribosomal protein bS6 family.</text>
</comment>
<feature type="chain" id="PRO_0000229560" description="Small ribosomal subunit protein bS6">
    <location>
        <begin position="1"/>
        <end position="115"/>
    </location>
</feature>
<evidence type="ECO:0000255" key="1">
    <source>
        <dbReference type="HAMAP-Rule" id="MF_00360"/>
    </source>
</evidence>
<evidence type="ECO:0000305" key="2"/>
<name>RS6_SYNC1</name>
<accession>Q3A317</accession>
<reference key="1">
    <citation type="submission" date="2005-10" db="EMBL/GenBank/DDBJ databases">
        <title>Complete sequence of Pelobacter carbinolicus DSM 2380.</title>
        <authorList>
            <person name="Copeland A."/>
            <person name="Lucas S."/>
            <person name="Lapidus A."/>
            <person name="Barry K."/>
            <person name="Detter J.C."/>
            <person name="Glavina T."/>
            <person name="Hammon N."/>
            <person name="Israni S."/>
            <person name="Pitluck S."/>
            <person name="Chertkov O."/>
            <person name="Schmutz J."/>
            <person name="Larimer F."/>
            <person name="Land M."/>
            <person name="Kyrpides N."/>
            <person name="Ivanova N."/>
            <person name="Richardson P."/>
        </authorList>
    </citation>
    <scope>NUCLEOTIDE SEQUENCE [LARGE SCALE GENOMIC DNA]</scope>
    <source>
        <strain>DSM 2380 / NBRC 103641 / GraBd1</strain>
    </source>
</reference>
<organism>
    <name type="scientific">Syntrophotalea carbinolica (strain DSM 2380 / NBRC 103641 / GraBd1)</name>
    <name type="common">Pelobacter carbinolicus</name>
    <dbReference type="NCBI Taxonomy" id="338963"/>
    <lineage>
        <taxon>Bacteria</taxon>
        <taxon>Pseudomonadati</taxon>
        <taxon>Thermodesulfobacteriota</taxon>
        <taxon>Desulfuromonadia</taxon>
        <taxon>Desulfuromonadales</taxon>
        <taxon>Syntrophotaleaceae</taxon>
        <taxon>Syntrophotalea</taxon>
    </lineage>
</organism>
<sequence>MRTYENIMIVHPDKVADEYNAVVEKFKGVLTDLNANLLKVDEWGVRKLAYPVKKQGRGSYVLTVFEADPTIIDEYERRLRLDEAVIKFQTVLLEKGFVEEAAAAAEEGANAEEEE</sequence>
<gene>
    <name evidence="1" type="primary">rpsF</name>
    <name type="ordered locus">Pcar_1999</name>
</gene>